<feature type="peptide" id="PRO_0000044539" description="Tertiapin" evidence="10 11">
    <location>
        <begin position="1"/>
        <end position="21"/>
    </location>
</feature>
<feature type="site" description="Is responsible of pH dependence of the channel block">
    <location>
        <position position="12"/>
    </location>
</feature>
<feature type="site" description="Susceptible to oxidation" evidence="1">
    <location>
        <position position="13"/>
    </location>
</feature>
<feature type="disulfide bond" evidence="9 16">
    <location>
        <begin position="3"/>
        <end position="14"/>
    </location>
</feature>
<feature type="disulfide bond" evidence="9 16">
    <location>
        <begin position="5"/>
        <end position="18"/>
    </location>
</feature>
<feature type="mutagenesis site" description="Inhibits with high affinity rat but not human Kir1.1 channels stably expressed in HEK293 cells; when associated with K-12 and Q-13." evidence="7">
    <original>A</original>
    <variation>Y</variation>
    <location>
        <position position="1"/>
    </location>
</feature>
<feature type="mutagenesis site" description="Eliminates the pH dependence of the channel block; when associated with Q-13. Inhibits with high affinity rat but not human Kir1.1 channels stably expressed in HEK293 cells; when associated with Y-1 and Q-13." evidence="5 7">
    <original>H</original>
    <variation>K</variation>
    <location>
        <position position="12"/>
    </location>
</feature>
<feature type="mutagenesis site" description="Stable fully functional peptide. Inhibits with high affinity rat but not human Kir1.1 channels stably expressed in HEK293 cells; when associated with Y-1 and K-12." evidence="1 5 7">
    <original>M</original>
    <variation>Q</variation>
    <location>
        <position position="13"/>
    </location>
</feature>
<feature type="strand" evidence="17">
    <location>
        <begin position="7"/>
        <end position="9"/>
    </location>
</feature>
<feature type="helix" evidence="17">
    <location>
        <begin position="12"/>
        <end position="19"/>
    </location>
</feature>
<accession>P56587</accession>
<evidence type="ECO:0000269" key="1">
    <source>
    </source>
</evidence>
<evidence type="ECO:0000269" key="2">
    <source>
    </source>
</evidence>
<evidence type="ECO:0000269" key="3">
    <source>
    </source>
</evidence>
<evidence type="ECO:0000269" key="4">
    <source>
    </source>
</evidence>
<evidence type="ECO:0000269" key="5">
    <source>
    </source>
</evidence>
<evidence type="ECO:0000269" key="6">
    <source>
    </source>
</evidence>
<evidence type="ECO:0000269" key="7">
    <source>
    </source>
</evidence>
<evidence type="ECO:0000269" key="8">
    <source>
    </source>
</evidence>
<evidence type="ECO:0000269" key="9">
    <source>
    </source>
</evidence>
<evidence type="ECO:0000269" key="10">
    <source>
    </source>
</evidence>
<evidence type="ECO:0000269" key="11">
    <source ref="1"/>
</evidence>
<evidence type="ECO:0000303" key="12">
    <source>
    </source>
</evidence>
<evidence type="ECO:0000303" key="13">
    <source ref="1"/>
</evidence>
<evidence type="ECO:0000305" key="14">
    <source>
    </source>
</evidence>
<evidence type="ECO:0000305" key="15">
    <source ref="1"/>
</evidence>
<evidence type="ECO:0000312" key="16">
    <source>
        <dbReference type="PDB" id="1TER"/>
    </source>
</evidence>
<evidence type="ECO:0007829" key="17">
    <source>
        <dbReference type="PDB" id="1TER"/>
    </source>
</evidence>
<comment type="function">
    <text evidence="2 3 4 6 8 10">Presynaptic neurotoxin that blocks the inwardly rectifying Kir1.1/KCNJ1 and Kir3.1/3.4 (KCNJ3/KCNJ5) potassium channels with high affinity by binding to the M1-M2 linker region of these channels in a 1:1 stoichiometry. It may block the potassium channel pore by occluding its alpha helix into the channel vestibule. Tertiapin-Q also inhibits calcium-activated large conductance BK-type (KCNMA) potassium channels in a concentration-, and voltage-dependent manner, in addition to inhibiting Kir3.1/3.2 (KCNJ3/KCNJ6) heteromultimers potassium channels. It can prevent dose-dependently acetylcholine(ACh)-induced atrioventricular blocks in mammalian hearts, as KCNJ3/KCNJ5 channels (also named I(KACh), because these channels are activated by ACh) are found in mammalian myocytes. Interacts specifically with calmodulin in the presence of calcium.</text>
</comment>
<comment type="subcellular location">
    <subcellularLocation>
        <location evidence="10 11">Secreted</location>
    </subcellularLocation>
</comment>
<comment type="tissue specificity">
    <text evidence="14 15">Expressed by the venom gland.</text>
</comment>
<comment type="PTM">
    <text evidence="1">Oxidation of Met-13 results in the loss of biological activity.</text>
</comment>
<comment type="PTM">
    <text evidence="15">An amidation at Lys-21 is suggested in Ref.1.</text>
</comment>
<comment type="mass spectrometry"/>
<comment type="miscellaneous">
    <text>Tertiapin-Q is a stable (non-oxidizable) and functionally similar derivative of tertiapin whose Met-13 residue is replaced with a Gln residue.</text>
</comment>
<comment type="online information" name="Wikipedia">
    <link uri="https://en.wikipedia.org/wiki/Tertiapin"/>
    <text>Tertiapin entry</text>
</comment>
<dbReference type="PDB" id="1TER">
    <property type="method" value="NMR"/>
    <property type="chains" value="A=1-21"/>
</dbReference>
<dbReference type="PDBsum" id="1TER"/>
<dbReference type="SMR" id="P56587"/>
<dbReference type="STRING" id="7460.P56587"/>
<dbReference type="PaxDb" id="7460-GB40695-PA"/>
<dbReference type="InParanoid" id="P56587"/>
<dbReference type="EvolutionaryTrace" id="P56587"/>
<dbReference type="Proteomes" id="UP000005203">
    <property type="component" value="Unplaced"/>
</dbReference>
<dbReference type="GO" id="GO:0005576">
    <property type="term" value="C:extracellular region"/>
    <property type="evidence" value="ECO:0007669"/>
    <property type="project" value="UniProtKB-SubCell"/>
</dbReference>
<dbReference type="GO" id="GO:0044231">
    <property type="term" value="C:host cell presynaptic membrane"/>
    <property type="evidence" value="ECO:0007669"/>
    <property type="project" value="UniProtKB-KW"/>
</dbReference>
<dbReference type="GO" id="GO:0005516">
    <property type="term" value="F:calmodulin binding"/>
    <property type="evidence" value="ECO:0007669"/>
    <property type="project" value="UniProtKB-KW"/>
</dbReference>
<dbReference type="GO" id="GO:0015459">
    <property type="term" value="F:potassium channel regulator activity"/>
    <property type="evidence" value="ECO:0007669"/>
    <property type="project" value="UniProtKB-KW"/>
</dbReference>
<dbReference type="GO" id="GO:0090729">
    <property type="term" value="F:toxin activity"/>
    <property type="evidence" value="ECO:0007669"/>
    <property type="project" value="UniProtKB-KW"/>
</dbReference>
<dbReference type="InterPro" id="IPR049143">
    <property type="entry name" value="Tertiapin"/>
</dbReference>
<dbReference type="Pfam" id="PF21201">
    <property type="entry name" value="Tertiapin"/>
    <property type="match status" value="1"/>
</dbReference>
<organism>
    <name type="scientific">Apis mellifera</name>
    <name type="common">Honeybee</name>
    <dbReference type="NCBI Taxonomy" id="7460"/>
    <lineage>
        <taxon>Eukaryota</taxon>
        <taxon>Metazoa</taxon>
        <taxon>Ecdysozoa</taxon>
        <taxon>Arthropoda</taxon>
        <taxon>Hexapoda</taxon>
        <taxon>Insecta</taxon>
        <taxon>Pterygota</taxon>
        <taxon>Neoptera</taxon>
        <taxon>Endopterygota</taxon>
        <taxon>Hymenoptera</taxon>
        <taxon>Apocrita</taxon>
        <taxon>Aculeata</taxon>
        <taxon>Apoidea</taxon>
        <taxon>Anthophila</taxon>
        <taxon>Apidae</taxon>
        <taxon>Apis</taxon>
    </lineage>
</organism>
<keyword id="KW-0002">3D-structure</keyword>
<keyword id="KW-1221">Calcium-activated potassium channel impairing toxin</keyword>
<keyword id="KW-0112">Calmodulin-binding</keyword>
<keyword id="KW-0903">Direct protein sequencing</keyword>
<keyword id="KW-1015">Disulfide bond</keyword>
<keyword id="KW-0872">Ion channel impairing toxin</keyword>
<keyword id="KW-0528">Neurotoxin</keyword>
<keyword id="KW-0558">Oxidation</keyword>
<keyword id="KW-0632">Potassium channel impairing toxin</keyword>
<keyword id="KW-0638">Presynaptic neurotoxin</keyword>
<keyword id="KW-1185">Reference proteome</keyword>
<keyword id="KW-0964">Secreted</keyword>
<keyword id="KW-0800">Toxin</keyword>
<sequence>ALCNCNRIIIPHMCWKKCGKK</sequence>
<proteinExistence type="evidence at protein level"/>
<name>TERT_APIME</name>
<protein>
    <recommendedName>
        <fullName evidence="13">Tertiapin</fullName>
        <shortName evidence="12">TPN</shortName>
    </recommendedName>
</protein>
<reference key="1">
    <citation type="journal article" date="1980" name="Bioorg. Khim.">
        <title>Structure and presynaptic activity of tertiapin-neurotoxin from bee venom Apis mellifera.</title>
        <authorList>
            <person name="Ovchinnikov Y.A."/>
            <person name="Miroshnikov A.I."/>
            <person name="Kudelin A.B."/>
            <person name="Kostina M.B."/>
            <person name="Boikov V.A."/>
            <person name="Magazanik L.G."/>
            <person name="Gotgilf I.M."/>
        </authorList>
    </citation>
    <scope>PROTEIN SEQUENCE</scope>
    <scope>SUBCELLULAR LOCATION</scope>
    <source>
        <tissue>Venom</tissue>
    </source>
</reference>
<reference key="2">
    <citation type="journal article" date="1998" name="Biochemistry">
        <title>A novel high-affinity inhibitor for inward-rectifier K+ channels.</title>
        <authorList>
            <person name="Jin W."/>
            <person name="Lu Z."/>
        </authorList>
    </citation>
    <scope>PROTEIN SEQUENCE</scope>
    <scope>SYNTHESIS</scope>
    <scope>FUNCTION</scope>
    <scope>MASS SPECTROMETRY</scope>
    <scope>SUBCELLULAR LOCATION</scope>
    <source>
        <tissue>Venom</tissue>
    </source>
</reference>
<reference key="3">
    <citation type="journal article" date="1983" name="Bioorg. Khim.">
        <title>Interaction of tertiapin, a neurotoxin from bee venom, with calmodulin.</title>
        <authorList>
            <person name="Miroshnikov A.I."/>
            <person name="Boikov V.A."/>
            <person name="Snezhkova L.G."/>
            <person name="Severin S.E."/>
            <person name="Shvets V.I."/>
        </authorList>
    </citation>
    <scope>FUNCTION</scope>
    <source>
        <tissue>Venom</tissue>
    </source>
</reference>
<reference key="4">
    <citation type="journal article" date="1999" name="Biochemistry">
        <title>Synthesis of a stable form of tertiapin: a high-affinity inhibitor for inward-rectifier K+ channels.</title>
        <authorList>
            <person name="Jin W."/>
            <person name="Lu Z."/>
        </authorList>
    </citation>
    <scope>SYNTHESIS</scope>
    <scope>SUSCEPTIBILITY TO OXIDATION</scope>
    <scope>MUTAGENESIS OF MET-13</scope>
</reference>
<reference key="5">
    <citation type="journal article" date="1999" name="Biochemistry">
        <title>Mechanisms of inward-rectifier K+ channel inhibition by tertiapin-Q.</title>
        <authorList>
            <person name="Jin W."/>
            <person name="Klem A.M."/>
            <person name="Lewis J.H."/>
            <person name="Lu Z."/>
        </authorList>
    </citation>
    <scope>FUNCTION</scope>
    <scope>SYNTHESIS</scope>
    <scope>ALANINE-SCANNING MUTAGENESIS</scope>
</reference>
<reference key="6">
    <citation type="journal article" date="2000" name="Br. J. Pharmacol.">
        <title>The bee venom peptide tertiapin underlines the role of I(KACh) in acetylcholine-induced atrioventricular blocks.</title>
        <authorList>
            <person name="Drici M.D."/>
            <person name="Diochot S."/>
            <person name="Terrenoire C."/>
            <person name="Romey G."/>
            <person name="Lazdunski M."/>
        </authorList>
    </citation>
    <scope>FUNCTION</scope>
    <source>
        <tissue>Venom</tissue>
    </source>
</reference>
<reference key="7">
    <citation type="journal article" date="2000" name="J. Pharmacol. Exp. Ther.">
        <title>Tertiapin potently and selectively blocks muscarinic K(+) channels in rabbit cardiac myocytes.</title>
        <authorList>
            <person name="Kitamura H."/>
            <person name="Yokoyama M."/>
            <person name="Akita H."/>
            <person name="Matsushita K."/>
            <person name="Kurachi Y."/>
            <person name="Yamada M."/>
        </authorList>
    </citation>
    <scope>FUNCTION</scope>
</reference>
<reference key="8">
    <citation type="journal article" date="2001" name="Biochemistry">
        <title>Titration of tertiapin-Q inhibition of ROMK1 channels by extracellular protons.</title>
        <authorList>
            <person name="Ramu Y."/>
            <person name="Klem A.M."/>
            <person name="Lu Z."/>
        </authorList>
    </citation>
    <scope>MUTAGENESIS OF HIS-12 AND MET-13</scope>
</reference>
<reference key="9">
    <citation type="journal article" date="2005" name="J. Pharmacol. Exp. Ther.">
        <title>Tertiapin-Q blocks recombinant and native large conductance K+ channels in a use-dependent manner.</title>
        <authorList>
            <person name="Kanjhan R."/>
            <person name="Coulson E.J."/>
            <person name="Adams D.J."/>
            <person name="Bellingham M.C."/>
        </authorList>
    </citation>
    <scope>SYNTHESIS</scope>
    <scope>FUNCTION OF TERTIAPIN-Q</scope>
</reference>
<reference key="10">
    <citation type="journal article" date="2006" name="Pharmacol. Res.">
        <title>Tertiapin, a selective I(KACh) blocker, terminates atrial fibrillation with selective atrial effective refractory period prolongation.</title>
        <authorList>
            <person name="Hashimoto N."/>
            <person name="Yamashita T."/>
            <person name="Tsuruzoe N."/>
        </authorList>
    </citation>
    <scope>FUNCTION</scope>
</reference>
<reference key="11">
    <citation type="journal article" date="2006" name="Biochemistry">
        <title>Characterization of Kir1.1 channels with the use of a radiolabeled derivative of tertiapin.</title>
        <authorList>
            <person name="Felix J.P."/>
            <person name="Liu J."/>
            <person name="Schmalhofer W.A."/>
            <person name="Bailey T."/>
            <person name="Bednarek M.A."/>
            <person name="Kinkel S."/>
            <person name="Weinglass A.B."/>
            <person name="Kohler M."/>
            <person name="Kaczorowski G.J."/>
            <person name="Priest B.T."/>
            <person name="Garcia M.L."/>
        </authorList>
    </citation>
    <scope>SYNTHESIS</scope>
    <scope>MUTAGENESIS OF ALA-1; HIS-12 AND MET-13</scope>
</reference>
<reference key="12">
    <citation type="journal article" date="1993" name="Proteins">
        <title>Solution structure of tertiapin determined using nuclear magnetic resonance and distance geometry.</title>
        <authorList>
            <person name="Xu X."/>
            <person name="Nelson J.W."/>
        </authorList>
    </citation>
    <scope>STRUCTURE BY NMR</scope>
    <scope>DISULFIDE BOND</scope>
    <source>
        <tissue>Venom</tissue>
    </source>
</reference>